<dbReference type="EMBL" id="X82776">
    <property type="protein sequence ID" value="CAA58020.1"/>
    <property type="molecule type" value="mRNA"/>
</dbReference>
<dbReference type="PIR" id="T06492">
    <property type="entry name" value="T06492"/>
</dbReference>
<dbReference type="SMR" id="P49208"/>
<dbReference type="GO" id="GO:0009507">
    <property type="term" value="C:chloroplast"/>
    <property type="evidence" value="ECO:0007669"/>
    <property type="project" value="UniProtKB-SubCell"/>
</dbReference>
<dbReference type="GO" id="GO:0015934">
    <property type="term" value="C:large ribosomal subunit"/>
    <property type="evidence" value="ECO:0007669"/>
    <property type="project" value="InterPro"/>
</dbReference>
<dbReference type="GO" id="GO:0019843">
    <property type="term" value="F:rRNA binding"/>
    <property type="evidence" value="ECO:0007669"/>
    <property type="project" value="UniProtKB-KW"/>
</dbReference>
<dbReference type="GO" id="GO:0003735">
    <property type="term" value="F:structural constituent of ribosome"/>
    <property type="evidence" value="ECO:0007669"/>
    <property type="project" value="InterPro"/>
</dbReference>
<dbReference type="GO" id="GO:0006412">
    <property type="term" value="P:translation"/>
    <property type="evidence" value="ECO:0007669"/>
    <property type="project" value="InterPro"/>
</dbReference>
<dbReference type="CDD" id="cd00403">
    <property type="entry name" value="Ribosomal_L1"/>
    <property type="match status" value="1"/>
</dbReference>
<dbReference type="FunFam" id="3.40.50.790:FF:000001">
    <property type="entry name" value="50S ribosomal protein L1"/>
    <property type="match status" value="1"/>
</dbReference>
<dbReference type="Gene3D" id="3.30.190.20">
    <property type="match status" value="1"/>
</dbReference>
<dbReference type="Gene3D" id="3.40.50.790">
    <property type="match status" value="1"/>
</dbReference>
<dbReference type="InterPro" id="IPR005878">
    <property type="entry name" value="Ribosom_uL1_bac-type"/>
</dbReference>
<dbReference type="InterPro" id="IPR023674">
    <property type="entry name" value="Ribosomal_uL1-like"/>
</dbReference>
<dbReference type="InterPro" id="IPR028364">
    <property type="entry name" value="Ribosomal_uL1/biogenesis"/>
</dbReference>
<dbReference type="InterPro" id="IPR016095">
    <property type="entry name" value="Ribosomal_uL1_3-a/b-sand"/>
</dbReference>
<dbReference type="InterPro" id="IPR023673">
    <property type="entry name" value="Ribosomal_uL1_CS"/>
</dbReference>
<dbReference type="NCBIfam" id="TIGR01169">
    <property type="entry name" value="rplA_bact"/>
    <property type="match status" value="1"/>
</dbReference>
<dbReference type="PANTHER" id="PTHR36427">
    <property type="entry name" value="54S RIBOSOMAL PROTEIN L1, MITOCHONDRIAL"/>
    <property type="match status" value="1"/>
</dbReference>
<dbReference type="PANTHER" id="PTHR36427:SF3">
    <property type="entry name" value="LARGE RIBOSOMAL SUBUNIT PROTEIN UL1M"/>
    <property type="match status" value="1"/>
</dbReference>
<dbReference type="Pfam" id="PF00687">
    <property type="entry name" value="Ribosomal_L1"/>
    <property type="match status" value="1"/>
</dbReference>
<dbReference type="SUPFAM" id="SSF56808">
    <property type="entry name" value="Ribosomal protein L1"/>
    <property type="match status" value="1"/>
</dbReference>
<dbReference type="PROSITE" id="PS01199">
    <property type="entry name" value="RIBOSOMAL_L1"/>
    <property type="match status" value="1"/>
</dbReference>
<evidence type="ECO:0000250" key="1"/>
<evidence type="ECO:0000255" key="2"/>
<evidence type="ECO:0000305" key="3"/>
<proteinExistence type="evidence at transcript level"/>
<protein>
    <recommendedName>
        <fullName evidence="3">Large ribosomal subunit protein uL1c</fullName>
    </recommendedName>
    <alternativeName>
        <fullName>50S ribosomal protein L1, chloroplastic</fullName>
    </alternativeName>
    <alternativeName>
        <fullName>CL1</fullName>
    </alternativeName>
</protein>
<gene>
    <name type="primary">RPL1</name>
</gene>
<feature type="transit peptide" description="Chloroplast" evidence="2">
    <location>
        <begin position="1" status="less than"/>
        <end status="unknown"/>
    </location>
</feature>
<feature type="chain" id="PRO_0000030478" description="Large ribosomal subunit protein uL1c">
    <location>
        <begin status="unknown"/>
        <end position="208" status="greater than"/>
    </location>
</feature>
<feature type="non-terminal residue">
    <location>
        <position position="1"/>
    </location>
</feature>
<feature type="non-terminal residue">
    <location>
        <position position="208"/>
    </location>
</feature>
<accession>P49208</accession>
<comment type="function">
    <text evidence="1">This protein binds directly to 23S ribosomal RNA.</text>
</comment>
<comment type="subunit">
    <text evidence="1">Part of the 50S ribosomal subunit.</text>
</comment>
<comment type="subcellular location">
    <subcellularLocation>
        <location>Plastid</location>
        <location>Chloroplast</location>
    </subcellularLocation>
</comment>
<comment type="similarity">
    <text evidence="3">Belongs to the universal ribosomal protein uL1 family.</text>
</comment>
<organism>
    <name type="scientific">Pisum sativum</name>
    <name type="common">Garden pea</name>
    <name type="synonym">Lathyrus oleraceus</name>
    <dbReference type="NCBI Taxonomy" id="3888"/>
    <lineage>
        <taxon>Eukaryota</taxon>
        <taxon>Viridiplantae</taxon>
        <taxon>Streptophyta</taxon>
        <taxon>Embryophyta</taxon>
        <taxon>Tracheophyta</taxon>
        <taxon>Spermatophyta</taxon>
        <taxon>Magnoliopsida</taxon>
        <taxon>eudicotyledons</taxon>
        <taxon>Gunneridae</taxon>
        <taxon>Pentapetalae</taxon>
        <taxon>rosids</taxon>
        <taxon>fabids</taxon>
        <taxon>Fabales</taxon>
        <taxon>Fabaceae</taxon>
        <taxon>Papilionoideae</taxon>
        <taxon>50 kb inversion clade</taxon>
        <taxon>NPAAA clade</taxon>
        <taxon>Hologalegina</taxon>
        <taxon>IRL clade</taxon>
        <taxon>Fabeae</taxon>
        <taxon>Pisum</taxon>
    </lineage>
</organism>
<reference key="1">
    <citation type="submission" date="1994-11" db="EMBL/GenBank/DDBJ databases">
        <authorList>
            <person name="Kavouski M."/>
            <person name="Webster C.I."/>
            <person name="Weglhner W."/>
            <person name="Gray J.C."/>
            <person name="Subramanian A.R."/>
        </authorList>
    </citation>
    <scope>NUCLEOTIDE SEQUENCE [MRNA]</scope>
    <source>
        <tissue>Leaf</tissue>
    </source>
</reference>
<name>RK1_PEA</name>
<sequence>IPLFLHLLLMSRKLLMKRRTKVVRRMNLMLLLTLLLSPLSLRQGKLHWRLKSDRVRSKRFLEIQKLRELKKEYDLKTAISLVKETAKTKFVETVEAHFRLNIDPKYNDQQLRATVSLPKGTGKPIKVAVLTQGERFDEAKNAGADLVGGEDLIEQIKGGFMEFDKLIASPDMMPKVASLGKILGPRGLMPNPKAGTVTANIPQAIAEF</sequence>
<keyword id="KW-0150">Chloroplast</keyword>
<keyword id="KW-0934">Plastid</keyword>
<keyword id="KW-0687">Ribonucleoprotein</keyword>
<keyword id="KW-0689">Ribosomal protein</keyword>
<keyword id="KW-0694">RNA-binding</keyword>
<keyword id="KW-0699">rRNA-binding</keyword>
<keyword id="KW-0809">Transit peptide</keyword>